<accession>Q58CV5</accession>
<reference key="1">
    <citation type="journal article" date="2005" name="BMC Genomics">
        <title>Characterization of 954 bovine full-CDS cDNA sequences.</title>
        <authorList>
            <person name="Harhay G.P."/>
            <person name="Sonstegard T.S."/>
            <person name="Keele J.W."/>
            <person name="Heaton M.P."/>
            <person name="Clawson M.L."/>
            <person name="Snelling W.M."/>
            <person name="Wiedmann R.T."/>
            <person name="Van Tassell C.P."/>
            <person name="Smith T.P.L."/>
        </authorList>
    </citation>
    <scope>NUCLEOTIDE SEQUENCE [LARGE SCALE MRNA]</scope>
</reference>
<protein>
    <recommendedName>
        <fullName evidence="4">Glucose-6-phosphate exchanger SLC37A2</fullName>
    </recommendedName>
    <alternativeName>
        <fullName evidence="1">Solute carrier family 37 member 2</fullName>
    </alternativeName>
</protein>
<dbReference type="EMBL" id="BT021842">
    <property type="protein sequence ID" value="AAX46689.1"/>
    <property type="molecule type" value="mRNA"/>
</dbReference>
<dbReference type="RefSeq" id="NP_001019657.1">
    <property type="nucleotide sequence ID" value="NM_001024486.1"/>
</dbReference>
<dbReference type="SMR" id="Q58CV5"/>
<dbReference type="FunCoup" id="Q58CV5">
    <property type="interactions" value="553"/>
</dbReference>
<dbReference type="STRING" id="9913.ENSBTAP00000063485"/>
<dbReference type="GlyCosmos" id="Q58CV5">
    <property type="glycosylation" value="3 sites, No reported glycans"/>
</dbReference>
<dbReference type="GlyGen" id="Q58CV5">
    <property type="glycosylation" value="3 sites"/>
</dbReference>
<dbReference type="PaxDb" id="9913-ENSBTAP00000022208"/>
<dbReference type="GeneID" id="506687"/>
<dbReference type="KEGG" id="bta:506687"/>
<dbReference type="CTD" id="219855"/>
<dbReference type="eggNOG" id="KOG2533">
    <property type="taxonomic scope" value="Eukaryota"/>
</dbReference>
<dbReference type="HOGENOM" id="CLU_001265_31_6_1"/>
<dbReference type="InParanoid" id="Q58CV5"/>
<dbReference type="OrthoDB" id="3639251at2759"/>
<dbReference type="TreeFam" id="TF314991"/>
<dbReference type="Proteomes" id="UP000009136">
    <property type="component" value="Unplaced"/>
</dbReference>
<dbReference type="GO" id="GO:0005789">
    <property type="term" value="C:endoplasmic reticulum membrane"/>
    <property type="evidence" value="ECO:0000250"/>
    <property type="project" value="UniProtKB"/>
</dbReference>
<dbReference type="GO" id="GO:0061513">
    <property type="term" value="F:glucose 6-phosphate:phosphate antiporter activity"/>
    <property type="evidence" value="ECO:0000250"/>
    <property type="project" value="UniProtKB"/>
</dbReference>
<dbReference type="GO" id="GO:0015760">
    <property type="term" value="P:glucose-6-phosphate transport"/>
    <property type="evidence" value="ECO:0000250"/>
    <property type="project" value="UniProtKB"/>
</dbReference>
<dbReference type="GO" id="GO:0035435">
    <property type="term" value="P:phosphate ion transmembrane transport"/>
    <property type="evidence" value="ECO:0000250"/>
    <property type="project" value="UniProtKB"/>
</dbReference>
<dbReference type="CDD" id="cd17344">
    <property type="entry name" value="MFS_SLC37A1_2"/>
    <property type="match status" value="1"/>
</dbReference>
<dbReference type="FunFam" id="1.20.1250.20:FF:000050">
    <property type="entry name" value="glucose-6-phosphate exchanger SLC37A2 isoform X1"/>
    <property type="match status" value="1"/>
</dbReference>
<dbReference type="FunFam" id="1.20.1250.20:FF:000028">
    <property type="entry name" value="Sugar phosphate exchanger 3 isoform 1"/>
    <property type="match status" value="1"/>
</dbReference>
<dbReference type="Gene3D" id="1.20.1250.20">
    <property type="entry name" value="MFS general substrate transporter like domains"/>
    <property type="match status" value="2"/>
</dbReference>
<dbReference type="InterPro" id="IPR011701">
    <property type="entry name" value="MFS"/>
</dbReference>
<dbReference type="InterPro" id="IPR020846">
    <property type="entry name" value="MFS_dom"/>
</dbReference>
<dbReference type="InterPro" id="IPR036259">
    <property type="entry name" value="MFS_trans_sf"/>
</dbReference>
<dbReference type="InterPro" id="IPR044740">
    <property type="entry name" value="SLC37A1_2"/>
</dbReference>
<dbReference type="InterPro" id="IPR000849">
    <property type="entry name" value="Sugar_P_transporter"/>
</dbReference>
<dbReference type="PANTHER" id="PTHR43184:SF9">
    <property type="entry name" value="GLUCOSE-6-PHOSPHATE EXCHANGER SLC37A2"/>
    <property type="match status" value="1"/>
</dbReference>
<dbReference type="PANTHER" id="PTHR43184">
    <property type="entry name" value="MAJOR FACILITATOR SUPERFAMILY TRANSPORTER 16, ISOFORM B"/>
    <property type="match status" value="1"/>
</dbReference>
<dbReference type="Pfam" id="PF07690">
    <property type="entry name" value="MFS_1"/>
    <property type="match status" value="1"/>
</dbReference>
<dbReference type="PIRSF" id="PIRSF002808">
    <property type="entry name" value="Hexose_phosphate_transp"/>
    <property type="match status" value="1"/>
</dbReference>
<dbReference type="SUPFAM" id="SSF103473">
    <property type="entry name" value="MFS general substrate transporter"/>
    <property type="match status" value="1"/>
</dbReference>
<dbReference type="PROSITE" id="PS50850">
    <property type="entry name" value="MFS"/>
    <property type="match status" value="1"/>
</dbReference>
<comment type="function">
    <text evidence="1">Inorganic phosphate and glucose-6-phosphate antiporter. May transport cytoplasmic glucose-6-phosphate into the lumen of the endoplasmic reticulum and translocate inorganic phosphate into the opposite direction. Independent of a lumenal glucose-6-phosphatase. May not play a role in homeostatic regulation of blood glucose levels.</text>
</comment>
<comment type="catalytic activity">
    <reaction evidence="1">
        <text>D-glucose 6-phosphate(in) + phosphate(out) = D-glucose 6-phosphate(out) + phosphate(in)</text>
        <dbReference type="Rhea" id="RHEA:71535"/>
        <dbReference type="ChEBI" id="CHEBI:43474"/>
        <dbReference type="ChEBI" id="CHEBI:61548"/>
    </reaction>
</comment>
<comment type="activity regulation">
    <text evidence="1">Inhibited by vanadate but not by chlorogenic acid.</text>
</comment>
<comment type="subcellular location">
    <subcellularLocation>
        <location evidence="1">Endoplasmic reticulum membrane</location>
        <topology evidence="2">Multi-pass membrane protein</topology>
    </subcellularLocation>
</comment>
<comment type="similarity">
    <text evidence="4">Belongs to the major facilitator superfamily. Organophosphate:Pi antiporter (OPA) (TC 2.A.1.4) family.</text>
</comment>
<evidence type="ECO:0000250" key="1">
    <source>
        <dbReference type="UniProtKB" id="Q8TED4"/>
    </source>
</evidence>
<evidence type="ECO:0000255" key="2"/>
<evidence type="ECO:0000256" key="3">
    <source>
        <dbReference type="SAM" id="MobiDB-lite"/>
    </source>
</evidence>
<evidence type="ECO:0000305" key="4"/>
<keyword id="KW-0050">Antiport</keyword>
<keyword id="KW-0256">Endoplasmic reticulum</keyword>
<keyword id="KW-0325">Glycoprotein</keyword>
<keyword id="KW-0472">Membrane</keyword>
<keyword id="KW-1185">Reference proteome</keyword>
<keyword id="KW-0762">Sugar transport</keyword>
<keyword id="KW-0812">Transmembrane</keyword>
<keyword id="KW-1133">Transmembrane helix</keyword>
<keyword id="KW-0813">Transport</keyword>
<sequence>MRSSLAPGIWYRAFILLITFLIYTCYHMSRKPISVVKSRLHHNCSEVIQPVNSTHSLNDTTWCNWAPFDKSNYKELLGAVDNAFLVAYAIGMFISGIFGERLPLRYYLTAGMLLSGLFTSLFGLGYFWNIHVLWYFVLVQIFNGLVQTTGWPAVVSCVGNWFGKGKRGLIMGIWNSHTSVGNILGSLLAGVWVDQQWGLSFVVPGVITAIMGIITFFFLIEYPEDVDCSPPQHHGNPEESQDQPEDPANGPSCNKESSLESAVTCSKEASAQPSAISFFGALRIPGVVEFSLCLLFAKLVSYTFLYWLPLYISNVVHFTAKEAGDLSTLFDVGGIIGGILAGLVSDYINGRATTCCVMLILAAPMMFLYNHVGQRGIGISIVMLLICGALVNGPYALITTAVSADLGTHKSLKGNAKALSTVTAIIDGTGSIGAALGPLLAGLISPTGWNNVFYMLIAADVLACLLLCRLVYKEILAWKSSLSKDRGYREM</sequence>
<feature type="chain" id="PRO_0000308321" description="Glucose-6-phosphate exchanger SLC37A2">
    <location>
        <begin position="1"/>
        <end position="491"/>
    </location>
</feature>
<feature type="transmembrane region" description="Helical" evidence="2">
    <location>
        <begin position="5"/>
        <end position="25"/>
    </location>
</feature>
<feature type="transmembrane region" description="Helical" evidence="2">
    <location>
        <begin position="78"/>
        <end position="98"/>
    </location>
</feature>
<feature type="transmembrane region" description="Helical" evidence="2">
    <location>
        <begin position="108"/>
        <end position="130"/>
    </location>
</feature>
<feature type="transmembrane region" description="Helical" evidence="2">
    <location>
        <begin position="132"/>
        <end position="154"/>
    </location>
</feature>
<feature type="transmembrane region" description="Helical" evidence="2">
    <location>
        <begin position="169"/>
        <end position="189"/>
    </location>
</feature>
<feature type="transmembrane region" description="Helical" evidence="2">
    <location>
        <begin position="200"/>
        <end position="220"/>
    </location>
</feature>
<feature type="transmembrane region" description="Helical" evidence="2">
    <location>
        <begin position="292"/>
        <end position="312"/>
    </location>
</feature>
<feature type="transmembrane region" description="Helical" evidence="2">
    <location>
        <begin position="328"/>
        <end position="348"/>
    </location>
</feature>
<feature type="transmembrane region" description="Helical" evidence="2">
    <location>
        <begin position="352"/>
        <end position="372"/>
    </location>
</feature>
<feature type="transmembrane region" description="Helical" evidence="2">
    <location>
        <begin position="377"/>
        <end position="397"/>
    </location>
</feature>
<feature type="transmembrane region" description="Helical" evidence="2">
    <location>
        <begin position="424"/>
        <end position="444"/>
    </location>
</feature>
<feature type="transmembrane region" description="Helical" evidence="2">
    <location>
        <begin position="452"/>
        <end position="472"/>
    </location>
</feature>
<feature type="region of interest" description="Disordered" evidence="3">
    <location>
        <begin position="229"/>
        <end position="257"/>
    </location>
</feature>
<feature type="glycosylation site" description="N-linked (GlcNAc...) asparagine" evidence="2">
    <location>
        <position position="43"/>
    </location>
</feature>
<feature type="glycosylation site" description="N-linked (GlcNAc...) asparagine" evidence="2">
    <location>
        <position position="52"/>
    </location>
</feature>
<feature type="glycosylation site" description="N-linked (GlcNAc...) asparagine" evidence="2">
    <location>
        <position position="58"/>
    </location>
</feature>
<proteinExistence type="evidence at transcript level"/>
<gene>
    <name evidence="1" type="primary">SLC37A2</name>
</gene>
<organism>
    <name type="scientific">Bos taurus</name>
    <name type="common">Bovine</name>
    <dbReference type="NCBI Taxonomy" id="9913"/>
    <lineage>
        <taxon>Eukaryota</taxon>
        <taxon>Metazoa</taxon>
        <taxon>Chordata</taxon>
        <taxon>Craniata</taxon>
        <taxon>Vertebrata</taxon>
        <taxon>Euteleostomi</taxon>
        <taxon>Mammalia</taxon>
        <taxon>Eutheria</taxon>
        <taxon>Laurasiatheria</taxon>
        <taxon>Artiodactyla</taxon>
        <taxon>Ruminantia</taxon>
        <taxon>Pecora</taxon>
        <taxon>Bovidae</taxon>
        <taxon>Bovinae</taxon>
        <taxon>Bos</taxon>
    </lineage>
</organism>
<name>G6PT3_BOVIN</name>